<keyword id="KW-1015">Disulfide bond</keyword>
<keyword id="KW-1254">Modulation of host virulence by virus</keyword>
<keyword id="KW-0732">Signal</keyword>
<keyword id="KW-0800">Toxin</keyword>
<keyword id="KW-1255">Viral exotoxin</keyword>
<keyword id="KW-0843">Virulence</keyword>
<accession>Q779K3</accession>
<accession>Q7B2T7</accession>
<organismHost>
    <name type="scientific">Shigella sonnei</name>
    <dbReference type="NCBI Taxonomy" id="624"/>
</organismHost>
<proteinExistence type="inferred from homology"/>
<dbReference type="EMBL" id="AJ132761">
    <property type="protein sequence ID" value="CAA10764.1"/>
    <property type="molecule type" value="Genomic_DNA"/>
</dbReference>
<dbReference type="EMBL" id="AJ279086">
    <property type="protein sequence ID" value="CAC12888.1"/>
    <property type="molecule type" value="Genomic_DNA"/>
</dbReference>
<dbReference type="SMR" id="Q779K3"/>
<dbReference type="GO" id="GO:0005576">
    <property type="term" value="C:extracellular region"/>
    <property type="evidence" value="ECO:0007669"/>
    <property type="project" value="InterPro"/>
</dbReference>
<dbReference type="GO" id="GO:0090729">
    <property type="term" value="F:toxin activity"/>
    <property type="evidence" value="ECO:0007669"/>
    <property type="project" value="UniProtKB-KW"/>
</dbReference>
<dbReference type="GO" id="GO:0019836">
    <property type="term" value="P:symbiont-mediated hemolysis of host erythrocyte"/>
    <property type="evidence" value="ECO:0007669"/>
    <property type="project" value="InterPro"/>
</dbReference>
<dbReference type="GO" id="GO:0098676">
    <property type="term" value="P:symbiont-mediated modulation of host virulence"/>
    <property type="evidence" value="ECO:0007669"/>
    <property type="project" value="UniProtKB-KW"/>
</dbReference>
<dbReference type="FunFam" id="2.40.50.70:FF:000001">
    <property type="entry name" value="Shiga toxin 1 subunit B"/>
    <property type="match status" value="1"/>
</dbReference>
<dbReference type="Gene3D" id="2.40.50.70">
    <property type="match status" value="1"/>
</dbReference>
<dbReference type="InterPro" id="IPR008992">
    <property type="entry name" value="Enterotoxin"/>
</dbReference>
<dbReference type="InterPro" id="IPR003189">
    <property type="entry name" value="SLT_beta"/>
</dbReference>
<dbReference type="NCBIfam" id="NF041697">
    <property type="entry name" value="Shig_StxB_1a"/>
    <property type="match status" value="1"/>
</dbReference>
<dbReference type="NCBIfam" id="NF033659">
    <property type="entry name" value="Shiga_Stx1B"/>
    <property type="match status" value="1"/>
</dbReference>
<dbReference type="Pfam" id="PF02258">
    <property type="entry name" value="SLT_beta"/>
    <property type="match status" value="1"/>
</dbReference>
<dbReference type="SUPFAM" id="SSF50203">
    <property type="entry name" value="Bacterial enterotoxins"/>
    <property type="match status" value="1"/>
</dbReference>
<feature type="signal peptide" evidence="2">
    <location>
        <begin position="1"/>
        <end position="20"/>
    </location>
</feature>
<feature type="chain" id="PRO_0000312307" description="Shiga toxin subunit B">
    <location>
        <begin position="21"/>
        <end position="89"/>
    </location>
</feature>
<feature type="disulfide bond" evidence="1">
    <location>
        <begin position="24"/>
        <end position="77"/>
    </location>
</feature>
<comment type="function">
    <text evidence="1">The B subunit is responsible for the binding of the holotoxin to specific receptors on the target cell surface, such as globotriaosylceramide (Gb3) in human intestinal microvilli.</text>
</comment>
<comment type="subunit">
    <text evidence="1">Shiga toxin contains a single subunit A and five copies of subunit B.</text>
</comment>
<comment type="domain">
    <text evidence="1">There are three Gb3-binding sites in each subunit B monomer, allowing for a tighter binding to the target cell. Binding sites 1 and 2 have higher binding affinities than site 3 (By similarity).</text>
</comment>
<comment type="similarity">
    <text evidence="3">Belongs to the stxB family.</text>
</comment>
<name>STXB_BP788</name>
<protein>
    <recommendedName>
        <fullName>Shiga toxin subunit B</fullName>
    </recommendedName>
</protein>
<organism>
    <name type="scientific">Shigella phage 7888</name>
    <name type="common">Shigella sonnei bacteriophage 7888</name>
    <dbReference type="NCBI Taxonomy" id="138946"/>
    <lineage>
        <taxon>Viruses</taxon>
        <taxon>Duplodnaviria</taxon>
        <taxon>Heunggongvirae</taxon>
        <taxon>Uroviricota</taxon>
        <taxon>Caudoviricetes</taxon>
        <taxon>Sepvirinae</taxon>
        <taxon>Traversvirus</taxon>
    </lineage>
</organism>
<reference key="1">
    <citation type="journal article" date="1999" name="Lancet">
        <title>Isolation of Shigella sonnei lysogenic for a bacteriophage encoding gene for production of Shiga toxin.</title>
        <authorList>
            <person name="Beutin L."/>
            <person name="Strauch E."/>
            <person name="Fischer I."/>
        </authorList>
    </citation>
    <scope>NUCLEOTIDE SEQUENCE [GENOMIC DNA]</scope>
</reference>
<reference key="2">
    <citation type="journal article" date="2001" name="Infect. Immun.">
        <title>Characterization of a Shiga toxin-encoding temperate bacteriophage of Shigella sonnei.</title>
        <authorList>
            <person name="Strauch E."/>
            <person name="Lurz R."/>
            <person name="Beutin L."/>
        </authorList>
    </citation>
    <scope>NUCLEOTIDE SEQUENCE [GENOMIC DNA]</scope>
</reference>
<evidence type="ECO:0000250" key="1"/>
<evidence type="ECO:0000255" key="2"/>
<evidence type="ECO:0000305" key="3"/>
<sequence>MKKTLLIAASLSFFSASALATPDCVTGKVEYTKYNDDDTFTVKVGDKELFTNRWNLQSLLLSAQITGMTVTIKTNACHNGGGFSEVIFR</sequence>
<gene>
    <name type="primary">stxB</name>
</gene>